<evidence type="ECO:0000255" key="1"/>
<evidence type="ECO:0000305" key="2"/>
<accession>P52383</accession>
<organism>
    <name type="scientific">Human herpesvirus 7 (strain JI)</name>
    <name type="common">HHV-7</name>
    <name type="synonym">Human T lymphotropic virus</name>
    <dbReference type="NCBI Taxonomy" id="57278"/>
    <lineage>
        <taxon>Viruses</taxon>
        <taxon>Duplodnaviria</taxon>
        <taxon>Heunggongvirae</taxon>
        <taxon>Peploviricota</taxon>
        <taxon>Herviviricetes</taxon>
        <taxon>Herpesvirales</taxon>
        <taxon>Orthoherpesviridae</taxon>
        <taxon>Betaherpesvirinae</taxon>
        <taxon>Roseolovirus</taxon>
        <taxon>Roseolovirus humanbeta7</taxon>
        <taxon>Human betaherpesvirus 7</taxon>
    </lineage>
</organism>
<organismHost>
    <name type="scientific">Homo sapiens</name>
    <name type="common">Human</name>
    <dbReference type="NCBI Taxonomy" id="9606"/>
</organismHost>
<name>VU51_HHV7J</name>
<sequence>MKNIDLTNWKLLAEIYEYLFFFSFFFLCLLVIIVVKFNNSTVGREYTFSTFSGMLVYILLLPVKMGMLTKMWDVSTDYCIILMFLSDFSFIFSSWALTLLALERINNFSFSEIKVNETKILKQMSFPIIWVTSIFQAVQISMKYKKSQMNLEDDYCLLAIERSAEEAWILLMYTVVIPTFIVFFYVLNKRFLFLERDLNSIVTHLSLFLFFGALCFFPASVLNEFNCNRLFYGLHELLIVCLELKIFYVPTMTYIISCENYRLAAKAFFCKCFKPCFLMPSLRKLQQPTKSTQF</sequence>
<comment type="subcellular location">
    <subcellularLocation>
        <location>Host cell membrane</location>
        <topology>Multi-pass membrane protein</topology>
    </subcellularLocation>
</comment>
<comment type="similarity">
    <text evidence="2">Belongs to the G-protein coupled receptor 1 family.</text>
</comment>
<reference key="1">
    <citation type="submission" date="1996-01" db="EMBL/GenBank/DDBJ databases">
        <authorList>
            <person name="Nicholas J."/>
        </authorList>
    </citation>
    <scope>NUCLEOTIDE SEQUENCE [GENOMIC DNA]</scope>
</reference>
<proteinExistence type="inferred from homology"/>
<protein>
    <recommendedName>
        <fullName>G-protein coupled receptor homolog U51</fullName>
    </recommendedName>
</protein>
<dbReference type="EMBL" id="U43400">
    <property type="protein sequence ID" value="AAC54713.1"/>
    <property type="molecule type" value="Genomic_DNA"/>
</dbReference>
<dbReference type="PIR" id="T41953">
    <property type="entry name" value="T41953"/>
</dbReference>
<dbReference type="RefSeq" id="YP_073791.1">
    <property type="nucleotide sequence ID" value="NC_001716.2"/>
</dbReference>
<dbReference type="SMR" id="P52383"/>
<dbReference type="DNASU" id="3289509"/>
<dbReference type="GeneID" id="3289509"/>
<dbReference type="KEGG" id="vg:3289509"/>
<dbReference type="Proteomes" id="UP000009246">
    <property type="component" value="Segment"/>
</dbReference>
<dbReference type="GO" id="GO:0020002">
    <property type="term" value="C:host cell plasma membrane"/>
    <property type="evidence" value="ECO:0007669"/>
    <property type="project" value="UniProtKB-SubCell"/>
</dbReference>
<dbReference type="GO" id="GO:0016020">
    <property type="term" value="C:membrane"/>
    <property type="evidence" value="ECO:0007669"/>
    <property type="project" value="UniProtKB-KW"/>
</dbReference>
<dbReference type="GO" id="GO:0004930">
    <property type="term" value="F:G protein-coupled receptor activity"/>
    <property type="evidence" value="ECO:0007669"/>
    <property type="project" value="UniProtKB-KW"/>
</dbReference>
<feature type="chain" id="PRO_0000070258" description="G-protein coupled receptor homolog U51">
    <location>
        <begin position="1"/>
        <end position="294"/>
    </location>
</feature>
<feature type="topological domain" description="Extracellular" evidence="1">
    <location>
        <begin position="1"/>
        <end position="14"/>
    </location>
</feature>
<feature type="transmembrane region" description="Helical; Name=1" evidence="1">
    <location>
        <begin position="15"/>
        <end position="35"/>
    </location>
</feature>
<feature type="topological domain" description="Cytoplasmic" evidence="1">
    <location>
        <begin position="36"/>
        <end position="47"/>
    </location>
</feature>
<feature type="transmembrane region" description="Helical; Name=2" evidence="1">
    <location>
        <begin position="48"/>
        <end position="68"/>
    </location>
</feature>
<feature type="topological domain" description="Extracellular" evidence="1">
    <location>
        <begin position="69"/>
        <end position="79"/>
    </location>
</feature>
<feature type="transmembrane region" description="Helical; Name=3" evidence="1">
    <location>
        <begin position="80"/>
        <end position="102"/>
    </location>
</feature>
<feature type="topological domain" description="Cytoplasmic" evidence="1">
    <location>
        <begin position="103"/>
        <end position="119"/>
    </location>
</feature>
<feature type="transmembrane region" description="Helical; Name=4" evidence="1">
    <location>
        <begin position="120"/>
        <end position="140"/>
    </location>
</feature>
<feature type="topological domain" description="Extracellular" evidence="1">
    <location>
        <begin position="141"/>
        <end position="166"/>
    </location>
</feature>
<feature type="transmembrane region" description="Helical; Name=5" evidence="1">
    <location>
        <begin position="167"/>
        <end position="187"/>
    </location>
</feature>
<feature type="topological domain" description="Cytoplasmic" evidence="1">
    <location>
        <begin position="188"/>
        <end position="200"/>
    </location>
</feature>
<feature type="transmembrane region" description="Helical; Name=6" evidence="1">
    <location>
        <begin position="201"/>
        <end position="221"/>
    </location>
</feature>
<feature type="topological domain" description="Extracellular" evidence="1">
    <location>
        <begin position="222"/>
        <end position="236"/>
    </location>
</feature>
<feature type="transmembrane region" description="Helical; Name=7" evidence="1">
    <location>
        <begin position="237"/>
        <end position="257"/>
    </location>
</feature>
<feature type="topological domain" description="Cytoplasmic" evidence="1">
    <location>
        <begin position="258"/>
        <end position="294"/>
    </location>
</feature>
<gene>
    <name type="primary">U51</name>
</gene>
<keyword id="KW-0297">G-protein coupled receptor</keyword>
<keyword id="KW-1032">Host cell membrane</keyword>
<keyword id="KW-1043">Host membrane</keyword>
<keyword id="KW-0472">Membrane</keyword>
<keyword id="KW-0675">Receptor</keyword>
<keyword id="KW-1185">Reference proteome</keyword>
<keyword id="KW-0807">Transducer</keyword>
<keyword id="KW-0812">Transmembrane</keyword>
<keyword id="KW-1133">Transmembrane helix</keyword>